<protein>
    <recommendedName>
        <fullName evidence="1">Glycerol-3-phosphate acyltransferase</fullName>
    </recommendedName>
    <alternativeName>
        <fullName evidence="1">Acyl-PO4 G3P acyltransferase</fullName>
    </alternativeName>
    <alternativeName>
        <fullName evidence="1">Acyl-phosphate--glycerol-3-phosphate acyltransferase</fullName>
    </alternativeName>
    <alternativeName>
        <fullName evidence="1">G3P acyltransferase</fullName>
        <shortName evidence="1">GPAT</shortName>
        <ecNumber evidence="1">2.3.1.275</ecNumber>
    </alternativeName>
    <alternativeName>
        <fullName evidence="1">Lysophosphatidic acid synthase</fullName>
        <shortName evidence="1">LPA synthase</shortName>
    </alternativeName>
</protein>
<accession>Q0AJ92</accession>
<name>PLSY_NITEC</name>
<dbReference type="EC" id="2.3.1.275" evidence="1"/>
<dbReference type="EMBL" id="CP000450">
    <property type="protein sequence ID" value="ABI58579.1"/>
    <property type="molecule type" value="Genomic_DNA"/>
</dbReference>
<dbReference type="RefSeq" id="WP_011633423.1">
    <property type="nucleotide sequence ID" value="NC_008344.1"/>
</dbReference>
<dbReference type="SMR" id="Q0AJ92"/>
<dbReference type="STRING" id="335283.Neut_0295"/>
<dbReference type="KEGG" id="net:Neut_0295"/>
<dbReference type="eggNOG" id="COG0344">
    <property type="taxonomic scope" value="Bacteria"/>
</dbReference>
<dbReference type="HOGENOM" id="CLU_081254_0_0_4"/>
<dbReference type="OrthoDB" id="9777124at2"/>
<dbReference type="UniPathway" id="UPA00085"/>
<dbReference type="Proteomes" id="UP000001966">
    <property type="component" value="Chromosome"/>
</dbReference>
<dbReference type="GO" id="GO:0005886">
    <property type="term" value="C:plasma membrane"/>
    <property type="evidence" value="ECO:0007669"/>
    <property type="project" value="UniProtKB-SubCell"/>
</dbReference>
<dbReference type="GO" id="GO:0043772">
    <property type="term" value="F:acyl-phosphate glycerol-3-phosphate acyltransferase activity"/>
    <property type="evidence" value="ECO:0007669"/>
    <property type="project" value="UniProtKB-UniRule"/>
</dbReference>
<dbReference type="GO" id="GO:0008654">
    <property type="term" value="P:phospholipid biosynthetic process"/>
    <property type="evidence" value="ECO:0007669"/>
    <property type="project" value="UniProtKB-UniRule"/>
</dbReference>
<dbReference type="HAMAP" id="MF_01043">
    <property type="entry name" value="PlsY"/>
    <property type="match status" value="1"/>
</dbReference>
<dbReference type="InterPro" id="IPR003811">
    <property type="entry name" value="G3P_acylTferase_PlsY"/>
</dbReference>
<dbReference type="NCBIfam" id="TIGR00023">
    <property type="entry name" value="glycerol-3-phosphate 1-O-acyltransferase PlsY"/>
    <property type="match status" value="1"/>
</dbReference>
<dbReference type="PANTHER" id="PTHR30309:SF0">
    <property type="entry name" value="GLYCEROL-3-PHOSPHATE ACYLTRANSFERASE-RELATED"/>
    <property type="match status" value="1"/>
</dbReference>
<dbReference type="PANTHER" id="PTHR30309">
    <property type="entry name" value="INNER MEMBRANE PROTEIN YGIH"/>
    <property type="match status" value="1"/>
</dbReference>
<dbReference type="Pfam" id="PF02660">
    <property type="entry name" value="G3P_acyltransf"/>
    <property type="match status" value="1"/>
</dbReference>
<dbReference type="SMART" id="SM01207">
    <property type="entry name" value="G3P_acyltransf"/>
    <property type="match status" value="1"/>
</dbReference>
<sequence>MITVILIFSAYLLGSISFAVVASWLFKLPDPRSYGSGNPGATNVLRTGKKVAAAVTLLGDAGKGWVAVVVAKYLGNVLGLGDEVIASAALAVFLGHLFPIFLAFKGGKGVATSAGILLGLNLWLGILAILTWIIVALVSRISSLSALLSALLAPLYTYFLLQKEMLTITVLIISILLILKHQSNIANLIAGKETRIGKSS</sequence>
<comment type="function">
    <text evidence="1">Catalyzes the transfer of an acyl group from acyl-phosphate (acyl-PO(4)) to glycerol-3-phosphate (G3P) to form lysophosphatidic acid (LPA). This enzyme utilizes acyl-phosphate as fatty acyl donor, but not acyl-CoA or acyl-ACP.</text>
</comment>
<comment type="catalytic activity">
    <reaction evidence="1">
        <text>an acyl phosphate + sn-glycerol 3-phosphate = a 1-acyl-sn-glycero-3-phosphate + phosphate</text>
        <dbReference type="Rhea" id="RHEA:34075"/>
        <dbReference type="ChEBI" id="CHEBI:43474"/>
        <dbReference type="ChEBI" id="CHEBI:57597"/>
        <dbReference type="ChEBI" id="CHEBI:57970"/>
        <dbReference type="ChEBI" id="CHEBI:59918"/>
        <dbReference type="EC" id="2.3.1.275"/>
    </reaction>
</comment>
<comment type="pathway">
    <text evidence="1">Lipid metabolism; phospholipid metabolism.</text>
</comment>
<comment type="subunit">
    <text evidence="1">Probably interacts with PlsX.</text>
</comment>
<comment type="subcellular location">
    <subcellularLocation>
        <location evidence="1">Cell inner membrane</location>
        <topology evidence="1">Multi-pass membrane protein</topology>
    </subcellularLocation>
</comment>
<comment type="similarity">
    <text evidence="1">Belongs to the PlsY family.</text>
</comment>
<proteinExistence type="inferred from homology"/>
<evidence type="ECO:0000255" key="1">
    <source>
        <dbReference type="HAMAP-Rule" id="MF_01043"/>
    </source>
</evidence>
<gene>
    <name evidence="1" type="primary">plsY</name>
    <name type="ordered locus">Neut_0295</name>
</gene>
<feature type="chain" id="PRO_1000064198" description="Glycerol-3-phosphate acyltransferase">
    <location>
        <begin position="1"/>
        <end position="200"/>
    </location>
</feature>
<feature type="transmembrane region" description="Helical" evidence="1">
    <location>
        <begin position="1"/>
        <end position="21"/>
    </location>
</feature>
<feature type="transmembrane region" description="Helical" evidence="1">
    <location>
        <begin position="51"/>
        <end position="71"/>
    </location>
</feature>
<feature type="transmembrane region" description="Helical" evidence="1">
    <location>
        <begin position="84"/>
        <end position="104"/>
    </location>
</feature>
<feature type="transmembrane region" description="Helical" evidence="1">
    <location>
        <begin position="116"/>
        <end position="136"/>
    </location>
</feature>
<feature type="transmembrane region" description="Helical" evidence="1">
    <location>
        <begin position="159"/>
        <end position="179"/>
    </location>
</feature>
<organism>
    <name type="scientific">Nitrosomonas eutropha (strain DSM 101675 / C91 / Nm57)</name>
    <dbReference type="NCBI Taxonomy" id="335283"/>
    <lineage>
        <taxon>Bacteria</taxon>
        <taxon>Pseudomonadati</taxon>
        <taxon>Pseudomonadota</taxon>
        <taxon>Betaproteobacteria</taxon>
        <taxon>Nitrosomonadales</taxon>
        <taxon>Nitrosomonadaceae</taxon>
        <taxon>Nitrosomonas</taxon>
    </lineage>
</organism>
<keyword id="KW-0997">Cell inner membrane</keyword>
<keyword id="KW-1003">Cell membrane</keyword>
<keyword id="KW-0444">Lipid biosynthesis</keyword>
<keyword id="KW-0443">Lipid metabolism</keyword>
<keyword id="KW-0472">Membrane</keyword>
<keyword id="KW-0594">Phospholipid biosynthesis</keyword>
<keyword id="KW-1208">Phospholipid metabolism</keyword>
<keyword id="KW-0808">Transferase</keyword>
<keyword id="KW-0812">Transmembrane</keyword>
<keyword id="KW-1133">Transmembrane helix</keyword>
<reference key="1">
    <citation type="journal article" date="2007" name="Environ. Microbiol.">
        <title>Whole-genome analysis of the ammonia-oxidizing bacterium, Nitrosomonas eutropha C91: implications for niche adaptation.</title>
        <authorList>
            <person name="Stein L.Y."/>
            <person name="Arp D.J."/>
            <person name="Berube P.M."/>
            <person name="Chain P.S."/>
            <person name="Hauser L."/>
            <person name="Jetten M.S."/>
            <person name="Klotz M.G."/>
            <person name="Larimer F.W."/>
            <person name="Norton J.M."/>
            <person name="Op den Camp H.J.M."/>
            <person name="Shin M."/>
            <person name="Wei X."/>
        </authorList>
    </citation>
    <scope>NUCLEOTIDE SEQUENCE [LARGE SCALE GENOMIC DNA]</scope>
    <source>
        <strain>DSM 101675 / C91 / Nm57</strain>
    </source>
</reference>